<reference key="1">
    <citation type="journal article" date="2003" name="Curr. Microbiol.">
        <title>Organization of carboxysome genes in the thiobacilli.</title>
        <authorList>
            <person name="Cannon G.C."/>
            <person name="Baker S.H."/>
            <person name="Soyer F."/>
            <person name="Johnson D.R."/>
            <person name="Bradburne C.E."/>
            <person name="Mehlman J.L."/>
            <person name="Davies P.S."/>
            <person name="Jiang Q.L."/>
            <person name="Heinhorst S."/>
            <person name="Shively J.M."/>
        </authorList>
    </citation>
    <scope>NUCLEOTIDE SEQUENCE [GENOMIC DNA]</scope>
</reference>
<reference key="2">
    <citation type="submission" date="2010-04" db="EMBL/GenBank/DDBJ databases">
        <title>Complete sequence of Thiomonas intermedia K12.</title>
        <authorList>
            <consortium name="US DOE Joint Genome Institute"/>
            <person name="Lucas S."/>
            <person name="Copeland A."/>
            <person name="Lapidus A."/>
            <person name="Cheng J.-F."/>
            <person name="Bruce D."/>
            <person name="Goodwin L."/>
            <person name="Pitluck S."/>
            <person name="Davenport K."/>
            <person name="Detter J.C."/>
            <person name="Han C."/>
            <person name="Tapia R."/>
            <person name="Land M."/>
            <person name="Hauser L."/>
            <person name="Kyrpides N."/>
            <person name="Ovchinnikova G."/>
            <person name="Kerfeld C.A."/>
            <person name="Cannon G.C."/>
            <person name="Heinhorst S."/>
            <person name="Woyke T."/>
        </authorList>
    </citation>
    <scope>NUCLEOTIDE SEQUENCE [LARGE SCALE GENOMIC DNA]</scope>
    <source>
        <strain>K12</strain>
    </source>
</reference>
<dbReference type="EC" id="4.1.1.39" evidence="1"/>
<dbReference type="EMBL" id="AF046933">
    <property type="protein sequence ID" value="AAD02445.1"/>
    <property type="molecule type" value="Genomic_DNA"/>
</dbReference>
<dbReference type="EMBL" id="CP002021">
    <property type="protein sequence ID" value="ADG29528.1"/>
    <property type="molecule type" value="Genomic_DNA"/>
</dbReference>
<dbReference type="SMR" id="Q9ZHZ1"/>
<dbReference type="STRING" id="75379.Tint_0115"/>
<dbReference type="KEGG" id="tin:Tint_0115"/>
<dbReference type="eggNOG" id="COG1850">
    <property type="taxonomic scope" value="Bacteria"/>
</dbReference>
<dbReference type="HOGENOM" id="CLU_031450_2_0_4"/>
<dbReference type="BioCyc" id="TINT75379:TINT_RS00580-MONOMER"/>
<dbReference type="GO" id="GO:0000287">
    <property type="term" value="F:magnesium ion binding"/>
    <property type="evidence" value="ECO:0007669"/>
    <property type="project" value="UniProtKB-UniRule"/>
</dbReference>
<dbReference type="GO" id="GO:0004497">
    <property type="term" value="F:monooxygenase activity"/>
    <property type="evidence" value="ECO:0007669"/>
    <property type="project" value="UniProtKB-KW"/>
</dbReference>
<dbReference type="GO" id="GO:0016984">
    <property type="term" value="F:ribulose-bisphosphate carboxylase activity"/>
    <property type="evidence" value="ECO:0007669"/>
    <property type="project" value="UniProtKB-UniRule"/>
</dbReference>
<dbReference type="GO" id="GO:0019253">
    <property type="term" value="P:reductive pentose-phosphate cycle"/>
    <property type="evidence" value="ECO:0007669"/>
    <property type="project" value="UniProtKB-UniRule"/>
</dbReference>
<dbReference type="Gene3D" id="3.20.20.110">
    <property type="entry name" value="Ribulose bisphosphate carboxylase, large subunit, C-terminal domain"/>
    <property type="match status" value="1"/>
</dbReference>
<dbReference type="Gene3D" id="3.30.70.150">
    <property type="entry name" value="RuBisCO large subunit, N-terminal domain"/>
    <property type="match status" value="1"/>
</dbReference>
<dbReference type="HAMAP" id="MF_01338">
    <property type="entry name" value="RuBisCO_L_type1"/>
    <property type="match status" value="1"/>
</dbReference>
<dbReference type="InterPro" id="IPR033966">
    <property type="entry name" value="RuBisCO"/>
</dbReference>
<dbReference type="InterPro" id="IPR020878">
    <property type="entry name" value="RuBisCo_large_chain_AS"/>
</dbReference>
<dbReference type="InterPro" id="IPR000685">
    <property type="entry name" value="RuBisCO_lsu_C"/>
</dbReference>
<dbReference type="InterPro" id="IPR036376">
    <property type="entry name" value="RuBisCO_lsu_C_sf"/>
</dbReference>
<dbReference type="InterPro" id="IPR017443">
    <property type="entry name" value="RuBisCO_lsu_fd_N"/>
</dbReference>
<dbReference type="InterPro" id="IPR036422">
    <property type="entry name" value="RuBisCO_lsu_N_sf"/>
</dbReference>
<dbReference type="InterPro" id="IPR020888">
    <property type="entry name" value="RuBisCO_lsuI"/>
</dbReference>
<dbReference type="NCBIfam" id="NF003252">
    <property type="entry name" value="PRK04208.1"/>
    <property type="match status" value="1"/>
</dbReference>
<dbReference type="PANTHER" id="PTHR42704">
    <property type="entry name" value="RIBULOSE BISPHOSPHATE CARBOXYLASE"/>
    <property type="match status" value="1"/>
</dbReference>
<dbReference type="PANTHER" id="PTHR42704:SF17">
    <property type="entry name" value="RIBULOSE BISPHOSPHATE CARBOXYLASE LARGE CHAIN"/>
    <property type="match status" value="1"/>
</dbReference>
<dbReference type="Pfam" id="PF00016">
    <property type="entry name" value="RuBisCO_large"/>
    <property type="match status" value="1"/>
</dbReference>
<dbReference type="Pfam" id="PF02788">
    <property type="entry name" value="RuBisCO_large_N"/>
    <property type="match status" value="1"/>
</dbReference>
<dbReference type="SFLD" id="SFLDG01052">
    <property type="entry name" value="RuBisCO"/>
    <property type="match status" value="1"/>
</dbReference>
<dbReference type="SFLD" id="SFLDS00014">
    <property type="entry name" value="RuBisCO"/>
    <property type="match status" value="1"/>
</dbReference>
<dbReference type="SFLD" id="SFLDG00301">
    <property type="entry name" value="RuBisCO-like_proteins"/>
    <property type="match status" value="1"/>
</dbReference>
<dbReference type="SUPFAM" id="SSF51649">
    <property type="entry name" value="RuBisCo, C-terminal domain"/>
    <property type="match status" value="1"/>
</dbReference>
<dbReference type="SUPFAM" id="SSF54966">
    <property type="entry name" value="RuBisCO, large subunit, small (N-terminal) domain"/>
    <property type="match status" value="1"/>
</dbReference>
<dbReference type="PROSITE" id="PS00157">
    <property type="entry name" value="RUBISCO_LARGE"/>
    <property type="match status" value="1"/>
</dbReference>
<gene>
    <name evidence="1" type="primary">cbbL</name>
    <name type="ordered locus">Tint_0115</name>
</gene>
<organism>
    <name type="scientific">Thiomonas intermedia (strain K12)</name>
    <name type="common">Thiobacillus intermedius</name>
    <dbReference type="NCBI Taxonomy" id="75379"/>
    <lineage>
        <taxon>Bacteria</taxon>
        <taxon>Pseudomonadati</taxon>
        <taxon>Pseudomonadota</taxon>
        <taxon>Betaproteobacteria</taxon>
        <taxon>Burkholderiales</taxon>
        <taxon>Thiomonas</taxon>
    </lineage>
</organism>
<name>RBL1_THIK1</name>
<protein>
    <recommendedName>
        <fullName evidence="1">Ribulose bisphosphate carboxylase large chain</fullName>
        <shortName evidence="1">RuBisCO large subunit</shortName>
        <ecNumber evidence="1">4.1.1.39</ecNumber>
    </recommendedName>
</protein>
<sequence length="473" mass="52787">MAVKTYQAGVKEYRQTYWMPEYTPLDTDLLACFKITPQAGVDREEAAAAVAAESSTGTWTTVWTDLLTDMDYYKGRAYRIEDVPGDDTCFYAFIAYPIDLFEEGSVVNVFTSLVGNVFGFKAIRALRLEDIRFPIAYVKTCNGPPNGIQVERDVINKYGRPLLGCTIKPKLGLSGKNYGRAVYECLRGGLDFTKDDENINSQPFMRWKQRFDFVQEATLKAEQETGERKGHYLNVTAPTPDEMFKRAEYAKEIGAPIIMHDYITGGFCANTGLAQWCRDNGMLLHIHRAMHAVLDRNPHHGIHFRVLTKILRLSGGDHLHTGTVVGKLEGDRASTLGWIDLLRESYVPEDRSRGIFFDQDWGSMPGAFAVASGGIHVWHMPALVTIFGDDSVLQFGGGTLGHPWGNAAGAAANRVALEACVQARNEGRQVEKEGREILTAAAQHSPELKIAMETWKEIKFEFDTVDKLDVTNK</sequence>
<proteinExistence type="inferred from homology"/>
<accession>Q9ZHZ1</accession>
<accession>D5X330</accession>
<comment type="function">
    <text evidence="1">RuBisCO catalyzes two reactions: the carboxylation of D-ribulose 1,5-bisphosphate, the primary event in carbon dioxide fixation, as well as the oxidative fragmentation of the pentose substrate. Both reactions occur simultaneously and in competition at the same active site.</text>
</comment>
<comment type="catalytic activity">
    <reaction evidence="1">
        <text>2 (2R)-3-phosphoglycerate + 2 H(+) = D-ribulose 1,5-bisphosphate + CO2 + H2O</text>
        <dbReference type="Rhea" id="RHEA:23124"/>
        <dbReference type="ChEBI" id="CHEBI:15377"/>
        <dbReference type="ChEBI" id="CHEBI:15378"/>
        <dbReference type="ChEBI" id="CHEBI:16526"/>
        <dbReference type="ChEBI" id="CHEBI:57870"/>
        <dbReference type="ChEBI" id="CHEBI:58272"/>
        <dbReference type="EC" id="4.1.1.39"/>
    </reaction>
</comment>
<comment type="catalytic activity">
    <reaction evidence="1">
        <text>D-ribulose 1,5-bisphosphate + O2 = 2-phosphoglycolate + (2R)-3-phosphoglycerate + 2 H(+)</text>
        <dbReference type="Rhea" id="RHEA:36631"/>
        <dbReference type="ChEBI" id="CHEBI:15378"/>
        <dbReference type="ChEBI" id="CHEBI:15379"/>
        <dbReference type="ChEBI" id="CHEBI:57870"/>
        <dbReference type="ChEBI" id="CHEBI:58033"/>
        <dbReference type="ChEBI" id="CHEBI:58272"/>
    </reaction>
</comment>
<comment type="cofactor">
    <cofactor evidence="1">
        <name>Mg(2+)</name>
        <dbReference type="ChEBI" id="CHEBI:18420"/>
    </cofactor>
    <text evidence="1">Binds 1 Mg(2+) ion per subunit.</text>
</comment>
<comment type="subunit">
    <text evidence="1">Heterohexadecamer of 8 large chains and 8 small chains.</text>
</comment>
<comment type="miscellaneous">
    <text evidence="1">The basic functional RuBisCO is composed of a large chain homodimer in a 'head-to-tail' conformation. In form I RuBisCO this homodimer is arranged in a barrel-like tetramer with the small subunits forming a tetrameric 'cap' on each end of the 'barrel'.</text>
</comment>
<comment type="similarity">
    <text evidence="1">Belongs to the RuBisCO large chain family. Type I subfamily.</text>
</comment>
<evidence type="ECO:0000255" key="1">
    <source>
        <dbReference type="HAMAP-Rule" id="MF_01338"/>
    </source>
</evidence>
<feature type="chain" id="PRO_0000062659" description="Ribulose bisphosphate carboxylase large chain">
    <location>
        <begin position="1"/>
        <end position="473"/>
    </location>
</feature>
<feature type="active site" description="Proton acceptor" evidence="1">
    <location>
        <position position="168"/>
    </location>
</feature>
<feature type="active site" description="Proton acceptor" evidence="1">
    <location>
        <position position="287"/>
    </location>
</feature>
<feature type="binding site" description="in homodimeric partner" evidence="1">
    <location>
        <position position="116"/>
    </location>
    <ligand>
        <name>substrate</name>
    </ligand>
</feature>
<feature type="binding site" evidence="1">
    <location>
        <position position="166"/>
    </location>
    <ligand>
        <name>substrate</name>
    </ligand>
</feature>
<feature type="binding site" evidence="1">
    <location>
        <position position="170"/>
    </location>
    <ligand>
        <name>substrate</name>
    </ligand>
</feature>
<feature type="binding site" description="via carbamate group" evidence="1">
    <location>
        <position position="194"/>
    </location>
    <ligand>
        <name>Mg(2+)</name>
        <dbReference type="ChEBI" id="CHEBI:18420"/>
    </ligand>
</feature>
<feature type="binding site" evidence="1">
    <location>
        <position position="196"/>
    </location>
    <ligand>
        <name>Mg(2+)</name>
        <dbReference type="ChEBI" id="CHEBI:18420"/>
    </ligand>
</feature>
<feature type="binding site" evidence="1">
    <location>
        <position position="197"/>
    </location>
    <ligand>
        <name>Mg(2+)</name>
        <dbReference type="ChEBI" id="CHEBI:18420"/>
    </ligand>
</feature>
<feature type="binding site" evidence="1">
    <location>
        <position position="288"/>
    </location>
    <ligand>
        <name>substrate</name>
    </ligand>
</feature>
<feature type="binding site" evidence="1">
    <location>
        <position position="320"/>
    </location>
    <ligand>
        <name>substrate</name>
    </ligand>
</feature>
<feature type="binding site" evidence="1">
    <location>
        <position position="372"/>
    </location>
    <ligand>
        <name>substrate</name>
    </ligand>
</feature>
<feature type="site" description="Transition state stabilizer" evidence="1">
    <location>
        <position position="327"/>
    </location>
</feature>
<feature type="modified residue" description="N6-carboxylysine" evidence="1">
    <location>
        <position position="194"/>
    </location>
</feature>
<keyword id="KW-0113">Calvin cycle</keyword>
<keyword id="KW-0120">Carbon dioxide fixation</keyword>
<keyword id="KW-0456">Lyase</keyword>
<keyword id="KW-0460">Magnesium</keyword>
<keyword id="KW-0479">Metal-binding</keyword>
<keyword id="KW-0503">Monooxygenase</keyword>
<keyword id="KW-0560">Oxidoreductase</keyword>